<organism>
    <name type="scientific">Streptococcus thermophilus (strain ATCC BAA-250 / LMG 18311)</name>
    <dbReference type="NCBI Taxonomy" id="264199"/>
    <lineage>
        <taxon>Bacteria</taxon>
        <taxon>Bacillati</taxon>
        <taxon>Bacillota</taxon>
        <taxon>Bacilli</taxon>
        <taxon>Lactobacillales</taxon>
        <taxon>Streptococcaceae</taxon>
        <taxon>Streptococcus</taxon>
    </lineage>
</organism>
<reference key="1">
    <citation type="journal article" date="2004" name="Nat. Biotechnol.">
        <title>Complete sequence and comparative genome analysis of the dairy bacterium Streptococcus thermophilus.</title>
        <authorList>
            <person name="Bolotin A."/>
            <person name="Quinquis B."/>
            <person name="Renault P."/>
            <person name="Sorokin A."/>
            <person name="Ehrlich S.D."/>
            <person name="Kulakauskas S."/>
            <person name="Lapidus A."/>
            <person name="Goltsman E."/>
            <person name="Mazur M."/>
            <person name="Pusch G.D."/>
            <person name="Fonstein M."/>
            <person name="Overbeek R."/>
            <person name="Kyprides N."/>
            <person name="Purnelle B."/>
            <person name="Prozzi D."/>
            <person name="Ngui K."/>
            <person name="Masuy D."/>
            <person name="Hancy F."/>
            <person name="Burteau S."/>
            <person name="Boutry M."/>
            <person name="Delcour J."/>
            <person name="Goffeau A."/>
            <person name="Hols P."/>
        </authorList>
    </citation>
    <scope>NUCLEOTIDE SEQUENCE [LARGE SCALE GENOMIC DNA]</scope>
    <source>
        <strain>ATCC BAA-250 / LMG 18311</strain>
    </source>
</reference>
<evidence type="ECO:0000255" key="1">
    <source>
        <dbReference type="HAMAP-Rule" id="MF_00402"/>
    </source>
</evidence>
<evidence type="ECO:0000305" key="2"/>
<sequence>MNPLIQSLTEGQLRTDIPSFRPGDTVRVHAKVVEGTRERIQIFEGVVISRKGQGISEMYTVRKISSGIGVERTFPIHTPRVDKIEVVRYGKVRRAKLYYLRALQGKAARIKEIRK</sequence>
<feature type="chain" id="PRO_0000163550" description="Large ribosomal subunit protein bL19">
    <location>
        <begin position="1"/>
        <end position="115"/>
    </location>
</feature>
<gene>
    <name evidence="1" type="primary">rplS</name>
    <name type="ordered locus">stu1179</name>
</gene>
<protein>
    <recommendedName>
        <fullName evidence="1">Large ribosomal subunit protein bL19</fullName>
    </recommendedName>
    <alternativeName>
        <fullName evidence="2">50S ribosomal protein L19</fullName>
    </alternativeName>
</protein>
<name>RL19_STRT2</name>
<dbReference type="EMBL" id="CP000023">
    <property type="protein sequence ID" value="AAV60815.1"/>
    <property type="molecule type" value="Genomic_DNA"/>
</dbReference>
<dbReference type="RefSeq" id="WP_002950935.1">
    <property type="nucleotide sequence ID" value="NC_006448.1"/>
</dbReference>
<dbReference type="SMR" id="Q5M427"/>
<dbReference type="STRING" id="264199.stu1179"/>
<dbReference type="GeneID" id="66898973"/>
<dbReference type="KEGG" id="stl:stu1179"/>
<dbReference type="eggNOG" id="COG0335">
    <property type="taxonomic scope" value="Bacteria"/>
</dbReference>
<dbReference type="HOGENOM" id="CLU_103507_2_1_9"/>
<dbReference type="Proteomes" id="UP000001170">
    <property type="component" value="Chromosome"/>
</dbReference>
<dbReference type="GO" id="GO:0022625">
    <property type="term" value="C:cytosolic large ribosomal subunit"/>
    <property type="evidence" value="ECO:0007669"/>
    <property type="project" value="TreeGrafter"/>
</dbReference>
<dbReference type="GO" id="GO:0003735">
    <property type="term" value="F:structural constituent of ribosome"/>
    <property type="evidence" value="ECO:0007669"/>
    <property type="project" value="InterPro"/>
</dbReference>
<dbReference type="GO" id="GO:0006412">
    <property type="term" value="P:translation"/>
    <property type="evidence" value="ECO:0007669"/>
    <property type="project" value="UniProtKB-UniRule"/>
</dbReference>
<dbReference type="FunFam" id="2.30.30.790:FF:000001">
    <property type="entry name" value="50S ribosomal protein L19"/>
    <property type="match status" value="1"/>
</dbReference>
<dbReference type="Gene3D" id="2.30.30.790">
    <property type="match status" value="1"/>
</dbReference>
<dbReference type="HAMAP" id="MF_00402">
    <property type="entry name" value="Ribosomal_bL19"/>
    <property type="match status" value="1"/>
</dbReference>
<dbReference type="InterPro" id="IPR001857">
    <property type="entry name" value="Ribosomal_bL19"/>
</dbReference>
<dbReference type="InterPro" id="IPR018257">
    <property type="entry name" value="Ribosomal_bL19_CS"/>
</dbReference>
<dbReference type="InterPro" id="IPR038657">
    <property type="entry name" value="Ribosomal_bL19_sf"/>
</dbReference>
<dbReference type="InterPro" id="IPR008991">
    <property type="entry name" value="Translation_prot_SH3-like_sf"/>
</dbReference>
<dbReference type="NCBIfam" id="TIGR01024">
    <property type="entry name" value="rplS_bact"/>
    <property type="match status" value="1"/>
</dbReference>
<dbReference type="PANTHER" id="PTHR15680:SF9">
    <property type="entry name" value="LARGE RIBOSOMAL SUBUNIT PROTEIN BL19M"/>
    <property type="match status" value="1"/>
</dbReference>
<dbReference type="PANTHER" id="PTHR15680">
    <property type="entry name" value="RIBOSOMAL PROTEIN L19"/>
    <property type="match status" value="1"/>
</dbReference>
<dbReference type="Pfam" id="PF01245">
    <property type="entry name" value="Ribosomal_L19"/>
    <property type="match status" value="1"/>
</dbReference>
<dbReference type="PIRSF" id="PIRSF002191">
    <property type="entry name" value="Ribosomal_L19"/>
    <property type="match status" value="1"/>
</dbReference>
<dbReference type="PRINTS" id="PR00061">
    <property type="entry name" value="RIBOSOMALL19"/>
</dbReference>
<dbReference type="SUPFAM" id="SSF50104">
    <property type="entry name" value="Translation proteins SH3-like domain"/>
    <property type="match status" value="1"/>
</dbReference>
<dbReference type="PROSITE" id="PS01015">
    <property type="entry name" value="RIBOSOMAL_L19"/>
    <property type="match status" value="1"/>
</dbReference>
<comment type="function">
    <text evidence="1">This protein is located at the 30S-50S ribosomal subunit interface and may play a role in the structure and function of the aminoacyl-tRNA binding site.</text>
</comment>
<comment type="similarity">
    <text evidence="1">Belongs to the bacterial ribosomal protein bL19 family.</text>
</comment>
<keyword id="KW-1185">Reference proteome</keyword>
<keyword id="KW-0687">Ribonucleoprotein</keyword>
<keyword id="KW-0689">Ribosomal protein</keyword>
<accession>Q5M427</accession>
<proteinExistence type="inferred from homology"/>